<feature type="chain" id="PRO_1000119687" description="Chaperone protein DnaK">
    <location>
        <begin position="1"/>
        <end position="637"/>
    </location>
</feature>
<feature type="region of interest" description="Disordered" evidence="2">
    <location>
        <begin position="484"/>
        <end position="528"/>
    </location>
</feature>
<feature type="region of interest" description="Disordered" evidence="2">
    <location>
        <begin position="598"/>
        <end position="637"/>
    </location>
</feature>
<feature type="compositionally biased region" description="Basic and acidic residues" evidence="2">
    <location>
        <begin position="501"/>
        <end position="528"/>
    </location>
</feature>
<feature type="compositionally biased region" description="Low complexity" evidence="2">
    <location>
        <begin position="600"/>
        <end position="620"/>
    </location>
</feature>
<feature type="compositionally biased region" description="Basic and acidic residues" evidence="2">
    <location>
        <begin position="621"/>
        <end position="637"/>
    </location>
</feature>
<feature type="modified residue" description="Phosphothreonine; by autocatalysis" evidence="1">
    <location>
        <position position="196"/>
    </location>
</feature>
<name>DNAK_CHLT3</name>
<gene>
    <name evidence="1" type="primary">dnaK</name>
    <name type="ordered locus">Ctha_1268</name>
</gene>
<evidence type="ECO:0000255" key="1">
    <source>
        <dbReference type="HAMAP-Rule" id="MF_00332"/>
    </source>
</evidence>
<evidence type="ECO:0000256" key="2">
    <source>
        <dbReference type="SAM" id="MobiDB-lite"/>
    </source>
</evidence>
<organism>
    <name type="scientific">Chloroherpeton thalassium (strain ATCC 35110 / GB-78)</name>
    <dbReference type="NCBI Taxonomy" id="517418"/>
    <lineage>
        <taxon>Bacteria</taxon>
        <taxon>Pseudomonadati</taxon>
        <taxon>Chlorobiota</taxon>
        <taxon>Chlorobiia</taxon>
        <taxon>Chlorobiales</taxon>
        <taxon>Chloroherpetonaceae</taxon>
        <taxon>Chloroherpeton</taxon>
    </lineage>
</organism>
<proteinExistence type="inferred from homology"/>
<sequence>MGKIIGIDLGTTNSCVAVMQGKDPVVIANAEGYRTTPSMVAFTKSGERLVGHAAKRQAITNATNTIFSIKRFMGRTQDEVPEETKMVPYQIVSEGNQARVKIGDKTHSPQEISAMILQKMKETAEDFLGEKVTEAVITVPAYFNDAQRQATKDAGQIAGLEVKRIINEPTAAALAYGLDKKQSNEKVAVFDLGGGTFDISVLELGDGVFEVRSTDGDTHLGGDNFDQILIDFLADEFKKQEMIDLRKDPMALQRLKEAAEKAKIELSSSAATEVNLPFITATQDGPKHLVVNITRAKFEGLCASLFDRILEPCRRAVKNAKLDVKEIDEVVLVGGSTRIPKVQQLVKEFFGKEPNRSVNPDEVVAVGAAIQGGVLKGDVTDVLLLDVTPLSLGIETLGGVMTKLIEANTTIPTKKQETFSTAADNQTSVEIHILQGERPMSTDNKTLGRFHLDGIPPAPRGVPQIEVAFDIDANGILHVSAKDKATGKEQSVRIEASGKLSETEIEKMKKDASSHADEDKKKKEEVDTKNTADALIFSTEKQINEIGDKLPAENLSKIQAALDRLKEAHKTGNTATIKPAMDALTKEWNEAASKMYGTEAGAPGAAGAAGAAGQGQSASSGKDDEVKNADFEVVDDK</sequence>
<accession>B3QZ38</accession>
<keyword id="KW-0067">ATP-binding</keyword>
<keyword id="KW-0143">Chaperone</keyword>
<keyword id="KW-0547">Nucleotide-binding</keyword>
<keyword id="KW-0597">Phosphoprotein</keyword>
<keyword id="KW-1185">Reference proteome</keyword>
<keyword id="KW-0346">Stress response</keyword>
<dbReference type="EMBL" id="CP001100">
    <property type="protein sequence ID" value="ACF13731.1"/>
    <property type="molecule type" value="Genomic_DNA"/>
</dbReference>
<dbReference type="RefSeq" id="WP_012499815.1">
    <property type="nucleotide sequence ID" value="NC_011026.1"/>
</dbReference>
<dbReference type="SMR" id="B3QZ38"/>
<dbReference type="STRING" id="517418.Ctha_1268"/>
<dbReference type="KEGG" id="cts:Ctha_1268"/>
<dbReference type="eggNOG" id="COG0443">
    <property type="taxonomic scope" value="Bacteria"/>
</dbReference>
<dbReference type="HOGENOM" id="CLU_005965_2_1_10"/>
<dbReference type="OrthoDB" id="9766019at2"/>
<dbReference type="Proteomes" id="UP000001208">
    <property type="component" value="Chromosome"/>
</dbReference>
<dbReference type="GO" id="GO:0005524">
    <property type="term" value="F:ATP binding"/>
    <property type="evidence" value="ECO:0007669"/>
    <property type="project" value="UniProtKB-UniRule"/>
</dbReference>
<dbReference type="GO" id="GO:0140662">
    <property type="term" value="F:ATP-dependent protein folding chaperone"/>
    <property type="evidence" value="ECO:0007669"/>
    <property type="project" value="InterPro"/>
</dbReference>
<dbReference type="GO" id="GO:0051082">
    <property type="term" value="F:unfolded protein binding"/>
    <property type="evidence" value="ECO:0007669"/>
    <property type="project" value="InterPro"/>
</dbReference>
<dbReference type="CDD" id="cd10234">
    <property type="entry name" value="ASKHA_NBD_HSP70_DnaK-like"/>
    <property type="match status" value="1"/>
</dbReference>
<dbReference type="FunFam" id="2.60.34.10:FF:000014">
    <property type="entry name" value="Chaperone protein DnaK HSP70"/>
    <property type="match status" value="1"/>
</dbReference>
<dbReference type="FunFam" id="1.20.1270.10:FF:000001">
    <property type="entry name" value="Molecular chaperone DnaK"/>
    <property type="match status" value="1"/>
</dbReference>
<dbReference type="FunFam" id="3.30.420.40:FF:000004">
    <property type="entry name" value="Molecular chaperone DnaK"/>
    <property type="match status" value="1"/>
</dbReference>
<dbReference type="FunFam" id="3.90.640.10:FF:000003">
    <property type="entry name" value="Molecular chaperone DnaK"/>
    <property type="match status" value="1"/>
</dbReference>
<dbReference type="Gene3D" id="1.20.1270.10">
    <property type="match status" value="1"/>
</dbReference>
<dbReference type="Gene3D" id="3.30.420.40">
    <property type="match status" value="2"/>
</dbReference>
<dbReference type="Gene3D" id="3.90.640.10">
    <property type="entry name" value="Actin, Chain A, domain 4"/>
    <property type="match status" value="1"/>
</dbReference>
<dbReference type="Gene3D" id="2.60.34.10">
    <property type="entry name" value="Substrate Binding Domain Of DNAk, Chain A, domain 1"/>
    <property type="match status" value="1"/>
</dbReference>
<dbReference type="HAMAP" id="MF_00332">
    <property type="entry name" value="DnaK"/>
    <property type="match status" value="1"/>
</dbReference>
<dbReference type="InterPro" id="IPR043129">
    <property type="entry name" value="ATPase_NBD"/>
</dbReference>
<dbReference type="InterPro" id="IPR012725">
    <property type="entry name" value="Chaperone_DnaK"/>
</dbReference>
<dbReference type="InterPro" id="IPR018181">
    <property type="entry name" value="Heat_shock_70_CS"/>
</dbReference>
<dbReference type="InterPro" id="IPR029048">
    <property type="entry name" value="HSP70_C_sf"/>
</dbReference>
<dbReference type="InterPro" id="IPR029047">
    <property type="entry name" value="HSP70_peptide-bd_sf"/>
</dbReference>
<dbReference type="InterPro" id="IPR013126">
    <property type="entry name" value="Hsp_70_fam"/>
</dbReference>
<dbReference type="NCBIfam" id="NF001413">
    <property type="entry name" value="PRK00290.1"/>
    <property type="match status" value="1"/>
</dbReference>
<dbReference type="NCBIfam" id="NF003520">
    <property type="entry name" value="PRK05183.1"/>
    <property type="match status" value="1"/>
</dbReference>
<dbReference type="NCBIfam" id="TIGR02350">
    <property type="entry name" value="prok_dnaK"/>
    <property type="match status" value="1"/>
</dbReference>
<dbReference type="PANTHER" id="PTHR19375">
    <property type="entry name" value="HEAT SHOCK PROTEIN 70KDA"/>
    <property type="match status" value="1"/>
</dbReference>
<dbReference type="Pfam" id="PF00012">
    <property type="entry name" value="HSP70"/>
    <property type="match status" value="1"/>
</dbReference>
<dbReference type="PRINTS" id="PR00301">
    <property type="entry name" value="HEATSHOCK70"/>
</dbReference>
<dbReference type="SUPFAM" id="SSF53067">
    <property type="entry name" value="Actin-like ATPase domain"/>
    <property type="match status" value="2"/>
</dbReference>
<dbReference type="SUPFAM" id="SSF100934">
    <property type="entry name" value="Heat shock protein 70kD (HSP70), C-terminal subdomain"/>
    <property type="match status" value="1"/>
</dbReference>
<dbReference type="SUPFAM" id="SSF100920">
    <property type="entry name" value="Heat shock protein 70kD (HSP70), peptide-binding domain"/>
    <property type="match status" value="1"/>
</dbReference>
<dbReference type="PROSITE" id="PS00297">
    <property type="entry name" value="HSP70_1"/>
    <property type="match status" value="1"/>
</dbReference>
<dbReference type="PROSITE" id="PS00329">
    <property type="entry name" value="HSP70_2"/>
    <property type="match status" value="1"/>
</dbReference>
<dbReference type="PROSITE" id="PS01036">
    <property type="entry name" value="HSP70_3"/>
    <property type="match status" value="1"/>
</dbReference>
<protein>
    <recommendedName>
        <fullName evidence="1">Chaperone protein DnaK</fullName>
    </recommendedName>
    <alternativeName>
        <fullName evidence="1">HSP70</fullName>
    </alternativeName>
    <alternativeName>
        <fullName evidence="1">Heat shock 70 kDa protein</fullName>
    </alternativeName>
    <alternativeName>
        <fullName evidence="1">Heat shock protein 70</fullName>
    </alternativeName>
</protein>
<comment type="function">
    <text evidence="1">Acts as a chaperone.</text>
</comment>
<comment type="induction">
    <text evidence="1">By stress conditions e.g. heat shock.</text>
</comment>
<comment type="similarity">
    <text evidence="1">Belongs to the heat shock protein 70 family.</text>
</comment>
<reference key="1">
    <citation type="submission" date="2008-06" db="EMBL/GenBank/DDBJ databases">
        <title>Complete sequence of Chloroherpeton thalassium ATCC 35110.</title>
        <authorList>
            <consortium name="US DOE Joint Genome Institute"/>
            <person name="Lucas S."/>
            <person name="Copeland A."/>
            <person name="Lapidus A."/>
            <person name="Glavina del Rio T."/>
            <person name="Dalin E."/>
            <person name="Tice H."/>
            <person name="Bruce D."/>
            <person name="Goodwin L."/>
            <person name="Pitluck S."/>
            <person name="Schmutz J."/>
            <person name="Larimer F."/>
            <person name="Land M."/>
            <person name="Hauser L."/>
            <person name="Kyrpides N."/>
            <person name="Mikhailova N."/>
            <person name="Liu Z."/>
            <person name="Li T."/>
            <person name="Zhao F."/>
            <person name="Overmann J."/>
            <person name="Bryant D.A."/>
            <person name="Richardson P."/>
        </authorList>
    </citation>
    <scope>NUCLEOTIDE SEQUENCE [LARGE SCALE GENOMIC DNA]</scope>
    <source>
        <strain>ATCC 35110 / GB-78</strain>
    </source>
</reference>